<evidence type="ECO:0000255" key="1">
    <source>
        <dbReference type="HAMAP-Rule" id="MF_00087"/>
    </source>
</evidence>
<name>HEM1_BURPS</name>
<gene>
    <name evidence="1" type="primary">hemA</name>
    <name type="ordered locus">BPSL3072</name>
</gene>
<comment type="function">
    <text evidence="1">Catalyzes the NADPH-dependent reduction of glutamyl-tRNA(Glu) to glutamate 1-semialdehyde (GSA).</text>
</comment>
<comment type="catalytic activity">
    <reaction evidence="1">
        <text>(S)-4-amino-5-oxopentanoate + tRNA(Glu) + NADP(+) = L-glutamyl-tRNA(Glu) + NADPH + H(+)</text>
        <dbReference type="Rhea" id="RHEA:12344"/>
        <dbReference type="Rhea" id="RHEA-COMP:9663"/>
        <dbReference type="Rhea" id="RHEA-COMP:9680"/>
        <dbReference type="ChEBI" id="CHEBI:15378"/>
        <dbReference type="ChEBI" id="CHEBI:57501"/>
        <dbReference type="ChEBI" id="CHEBI:57783"/>
        <dbReference type="ChEBI" id="CHEBI:58349"/>
        <dbReference type="ChEBI" id="CHEBI:78442"/>
        <dbReference type="ChEBI" id="CHEBI:78520"/>
        <dbReference type="EC" id="1.2.1.70"/>
    </reaction>
</comment>
<comment type="pathway">
    <text evidence="1">Porphyrin-containing compound metabolism; protoporphyrin-IX biosynthesis; 5-aminolevulinate from L-glutamyl-tRNA(Glu): step 1/2.</text>
</comment>
<comment type="subunit">
    <text evidence="1">Homodimer.</text>
</comment>
<comment type="domain">
    <text evidence="1">Possesses an unusual extended V-shaped dimeric structure with each monomer consisting of three distinct domains arranged along a curved 'spinal' alpha-helix. The N-terminal catalytic domain specifically recognizes the glutamate moiety of the substrate. The second domain is the NADPH-binding domain, and the third C-terminal domain is responsible for dimerization.</text>
</comment>
<comment type="miscellaneous">
    <text evidence="1">During catalysis, the active site Cys acts as a nucleophile attacking the alpha-carbonyl group of tRNA-bound glutamate with the formation of a thioester intermediate between enzyme and glutamate, and the concomitant release of tRNA(Glu). The thioester intermediate is finally reduced by direct hydride transfer from NADPH, to form the product GSA.</text>
</comment>
<comment type="similarity">
    <text evidence="1">Belongs to the glutamyl-tRNA reductase family.</text>
</comment>
<organism>
    <name type="scientific">Burkholderia pseudomallei (strain K96243)</name>
    <dbReference type="NCBI Taxonomy" id="272560"/>
    <lineage>
        <taxon>Bacteria</taxon>
        <taxon>Pseudomonadati</taxon>
        <taxon>Pseudomonadota</taxon>
        <taxon>Betaproteobacteria</taxon>
        <taxon>Burkholderiales</taxon>
        <taxon>Burkholderiaceae</taxon>
        <taxon>Burkholderia</taxon>
        <taxon>pseudomallei group</taxon>
    </lineage>
</organism>
<proteinExistence type="inferred from homology"/>
<dbReference type="EC" id="1.2.1.70" evidence="1"/>
<dbReference type="EMBL" id="BX571965">
    <property type="protein sequence ID" value="CAH37083.1"/>
    <property type="molecule type" value="Genomic_DNA"/>
</dbReference>
<dbReference type="SMR" id="Q63QF1"/>
<dbReference type="STRING" id="272560.BPSL3072"/>
<dbReference type="KEGG" id="bps:BPSL3072"/>
<dbReference type="eggNOG" id="COG0373">
    <property type="taxonomic scope" value="Bacteria"/>
</dbReference>
<dbReference type="UniPathway" id="UPA00251">
    <property type="reaction ID" value="UER00316"/>
</dbReference>
<dbReference type="Proteomes" id="UP000000605">
    <property type="component" value="Chromosome 1"/>
</dbReference>
<dbReference type="GO" id="GO:0008883">
    <property type="term" value="F:glutamyl-tRNA reductase activity"/>
    <property type="evidence" value="ECO:0007669"/>
    <property type="project" value="UniProtKB-UniRule"/>
</dbReference>
<dbReference type="GO" id="GO:0050661">
    <property type="term" value="F:NADP binding"/>
    <property type="evidence" value="ECO:0007669"/>
    <property type="project" value="InterPro"/>
</dbReference>
<dbReference type="GO" id="GO:0019353">
    <property type="term" value="P:protoporphyrinogen IX biosynthetic process from glutamate"/>
    <property type="evidence" value="ECO:0007669"/>
    <property type="project" value="TreeGrafter"/>
</dbReference>
<dbReference type="CDD" id="cd05213">
    <property type="entry name" value="NAD_bind_Glutamyl_tRNA_reduct"/>
    <property type="match status" value="1"/>
</dbReference>
<dbReference type="FunFam" id="3.30.460.30:FF:000001">
    <property type="entry name" value="Glutamyl-tRNA reductase"/>
    <property type="match status" value="1"/>
</dbReference>
<dbReference type="FunFam" id="3.40.50.720:FF:000031">
    <property type="entry name" value="Glutamyl-tRNA reductase"/>
    <property type="match status" value="1"/>
</dbReference>
<dbReference type="Gene3D" id="3.30.460.30">
    <property type="entry name" value="Glutamyl-tRNA reductase, N-terminal domain"/>
    <property type="match status" value="1"/>
</dbReference>
<dbReference type="Gene3D" id="3.40.50.720">
    <property type="entry name" value="NAD(P)-binding Rossmann-like Domain"/>
    <property type="match status" value="1"/>
</dbReference>
<dbReference type="HAMAP" id="MF_00087">
    <property type="entry name" value="Glu_tRNA_reductase"/>
    <property type="match status" value="1"/>
</dbReference>
<dbReference type="InterPro" id="IPR000343">
    <property type="entry name" value="4pyrrol_synth_GluRdtase"/>
</dbReference>
<dbReference type="InterPro" id="IPR015896">
    <property type="entry name" value="4pyrrol_synth_GluRdtase_dimer"/>
</dbReference>
<dbReference type="InterPro" id="IPR015895">
    <property type="entry name" value="4pyrrol_synth_GluRdtase_N"/>
</dbReference>
<dbReference type="InterPro" id="IPR018214">
    <property type="entry name" value="GluRdtase_CS"/>
</dbReference>
<dbReference type="InterPro" id="IPR036453">
    <property type="entry name" value="GluRdtase_dimer_dom_sf"/>
</dbReference>
<dbReference type="InterPro" id="IPR036343">
    <property type="entry name" value="GluRdtase_N_sf"/>
</dbReference>
<dbReference type="InterPro" id="IPR036291">
    <property type="entry name" value="NAD(P)-bd_dom_sf"/>
</dbReference>
<dbReference type="InterPro" id="IPR006151">
    <property type="entry name" value="Shikm_DH/Glu-tRNA_Rdtase"/>
</dbReference>
<dbReference type="NCBIfam" id="TIGR01035">
    <property type="entry name" value="hemA"/>
    <property type="match status" value="1"/>
</dbReference>
<dbReference type="PANTHER" id="PTHR43013">
    <property type="entry name" value="GLUTAMYL-TRNA REDUCTASE"/>
    <property type="match status" value="1"/>
</dbReference>
<dbReference type="PANTHER" id="PTHR43013:SF1">
    <property type="entry name" value="GLUTAMYL-TRNA REDUCTASE"/>
    <property type="match status" value="1"/>
</dbReference>
<dbReference type="Pfam" id="PF00745">
    <property type="entry name" value="GlutR_dimer"/>
    <property type="match status" value="1"/>
</dbReference>
<dbReference type="Pfam" id="PF05201">
    <property type="entry name" value="GlutR_N"/>
    <property type="match status" value="1"/>
</dbReference>
<dbReference type="Pfam" id="PF01488">
    <property type="entry name" value="Shikimate_DH"/>
    <property type="match status" value="1"/>
</dbReference>
<dbReference type="PIRSF" id="PIRSF000445">
    <property type="entry name" value="4pyrrol_synth_GluRdtase"/>
    <property type="match status" value="1"/>
</dbReference>
<dbReference type="SUPFAM" id="SSF69742">
    <property type="entry name" value="Glutamyl tRNA-reductase catalytic, N-terminal domain"/>
    <property type="match status" value="1"/>
</dbReference>
<dbReference type="SUPFAM" id="SSF69075">
    <property type="entry name" value="Glutamyl tRNA-reductase dimerization domain"/>
    <property type="match status" value="1"/>
</dbReference>
<dbReference type="SUPFAM" id="SSF51735">
    <property type="entry name" value="NAD(P)-binding Rossmann-fold domains"/>
    <property type="match status" value="1"/>
</dbReference>
<dbReference type="PROSITE" id="PS00747">
    <property type="entry name" value="GLUTR"/>
    <property type="match status" value="1"/>
</dbReference>
<sequence>MGLNDSLLDMQLLTIGINHHTAPVALRERVAFPLEQIKPALSTFKSVFLGHPAPNAPEAAILSTCNRTELYCATNDRAARDAAIRWMSDYHRIPADELAPHVYALPQSEAVRHAFRVASGLDSMVLGETQILGQMKNAVRTASEAGSLGTYLNQLFQRTFAVAKEVRGTTEIGAQSVSMAAAAVRLAQRIFEQVAQQRVLFIGAGEMIELCATHFAAQGPRELVVANRTAERGAKLAERFGGRAMPLADLPARMHEFDIIVSCTASTLPIIGLGAVERAVKARRHRPIFMVDLAVPRDIEPEVGKLKDVFLYTVDDLGAIVREGNASRQAAVAQAEAIIETRVQNFMQWLDARSIVPVIRHMHTQADALRRAEVERARKMLARGDDPDAVLDALSQALTNKLIHGPTSALNRANGADRDSLIDLMRGFYQHAPRSSDTSDR</sequence>
<accession>Q63QF1</accession>
<reference key="1">
    <citation type="journal article" date="2004" name="Proc. Natl. Acad. Sci. U.S.A.">
        <title>Genomic plasticity of the causative agent of melioidosis, Burkholderia pseudomallei.</title>
        <authorList>
            <person name="Holden M.T.G."/>
            <person name="Titball R.W."/>
            <person name="Peacock S.J."/>
            <person name="Cerdeno-Tarraga A.-M."/>
            <person name="Atkins T."/>
            <person name="Crossman L.C."/>
            <person name="Pitt T."/>
            <person name="Churcher C."/>
            <person name="Mungall K.L."/>
            <person name="Bentley S.D."/>
            <person name="Sebaihia M."/>
            <person name="Thomson N.R."/>
            <person name="Bason N."/>
            <person name="Beacham I.R."/>
            <person name="Brooks K."/>
            <person name="Brown K.A."/>
            <person name="Brown N.F."/>
            <person name="Challis G.L."/>
            <person name="Cherevach I."/>
            <person name="Chillingworth T."/>
            <person name="Cronin A."/>
            <person name="Crossett B."/>
            <person name="Davis P."/>
            <person name="DeShazer D."/>
            <person name="Feltwell T."/>
            <person name="Fraser A."/>
            <person name="Hance Z."/>
            <person name="Hauser H."/>
            <person name="Holroyd S."/>
            <person name="Jagels K."/>
            <person name="Keith K.E."/>
            <person name="Maddison M."/>
            <person name="Moule S."/>
            <person name="Price C."/>
            <person name="Quail M.A."/>
            <person name="Rabbinowitsch E."/>
            <person name="Rutherford K."/>
            <person name="Sanders M."/>
            <person name="Simmonds M."/>
            <person name="Songsivilai S."/>
            <person name="Stevens K."/>
            <person name="Tumapa S."/>
            <person name="Vesaratchavest M."/>
            <person name="Whitehead S."/>
            <person name="Yeats C."/>
            <person name="Barrell B.G."/>
            <person name="Oyston P.C.F."/>
            <person name="Parkhill J."/>
        </authorList>
    </citation>
    <scope>NUCLEOTIDE SEQUENCE [LARGE SCALE GENOMIC DNA]</scope>
    <source>
        <strain>K96243</strain>
    </source>
</reference>
<protein>
    <recommendedName>
        <fullName evidence="1">Glutamyl-tRNA reductase</fullName>
        <shortName evidence="1">GluTR</shortName>
        <ecNumber evidence="1">1.2.1.70</ecNumber>
    </recommendedName>
</protein>
<keyword id="KW-0521">NADP</keyword>
<keyword id="KW-0560">Oxidoreductase</keyword>
<keyword id="KW-0627">Porphyrin biosynthesis</keyword>
<keyword id="KW-1185">Reference proteome</keyword>
<feature type="chain" id="PRO_0000114001" description="Glutamyl-tRNA reductase">
    <location>
        <begin position="1"/>
        <end position="441"/>
    </location>
</feature>
<feature type="active site" description="Nucleophile" evidence="1">
    <location>
        <position position="65"/>
    </location>
</feature>
<feature type="binding site" evidence="1">
    <location>
        <begin position="64"/>
        <end position="67"/>
    </location>
    <ligand>
        <name>substrate</name>
    </ligand>
</feature>
<feature type="binding site" evidence="1">
    <location>
        <position position="123"/>
    </location>
    <ligand>
        <name>substrate</name>
    </ligand>
</feature>
<feature type="binding site" evidence="1">
    <location>
        <begin position="128"/>
        <end position="130"/>
    </location>
    <ligand>
        <name>substrate</name>
    </ligand>
</feature>
<feature type="binding site" evidence="1">
    <location>
        <position position="134"/>
    </location>
    <ligand>
        <name>substrate</name>
    </ligand>
</feature>
<feature type="binding site" evidence="1">
    <location>
        <begin position="203"/>
        <end position="208"/>
    </location>
    <ligand>
        <name>NADP(+)</name>
        <dbReference type="ChEBI" id="CHEBI:58349"/>
    </ligand>
</feature>
<feature type="site" description="Important for activity" evidence="1">
    <location>
        <position position="113"/>
    </location>
</feature>